<feature type="chain" id="PRO_0000353841" description="Putative ribosome biogenesis protein C306.07c">
    <location>
        <begin position="1"/>
        <end position="284"/>
    </location>
</feature>
<feature type="region of interest" description="Disordered" evidence="2">
    <location>
        <begin position="264"/>
        <end position="284"/>
    </location>
</feature>
<reference key="1">
    <citation type="journal article" date="2002" name="Nature">
        <title>The genome sequence of Schizosaccharomyces pombe.</title>
        <authorList>
            <person name="Wood V."/>
            <person name="Gwilliam R."/>
            <person name="Rajandream M.A."/>
            <person name="Lyne M.H."/>
            <person name="Lyne R."/>
            <person name="Stewart A."/>
            <person name="Sgouros J.G."/>
            <person name="Peat N."/>
            <person name="Hayles J."/>
            <person name="Baker S.G."/>
            <person name="Basham D."/>
            <person name="Bowman S."/>
            <person name="Brooks K."/>
            <person name="Brown D."/>
            <person name="Brown S."/>
            <person name="Chillingworth T."/>
            <person name="Churcher C.M."/>
            <person name="Collins M."/>
            <person name="Connor R."/>
            <person name="Cronin A."/>
            <person name="Davis P."/>
            <person name="Feltwell T."/>
            <person name="Fraser A."/>
            <person name="Gentles S."/>
            <person name="Goble A."/>
            <person name="Hamlin N."/>
            <person name="Harris D.E."/>
            <person name="Hidalgo J."/>
            <person name="Hodgson G."/>
            <person name="Holroyd S."/>
            <person name="Hornsby T."/>
            <person name="Howarth S."/>
            <person name="Huckle E.J."/>
            <person name="Hunt S."/>
            <person name="Jagels K."/>
            <person name="James K.D."/>
            <person name="Jones L."/>
            <person name="Jones M."/>
            <person name="Leather S."/>
            <person name="McDonald S."/>
            <person name="McLean J."/>
            <person name="Mooney P."/>
            <person name="Moule S."/>
            <person name="Mungall K.L."/>
            <person name="Murphy L.D."/>
            <person name="Niblett D."/>
            <person name="Odell C."/>
            <person name="Oliver K."/>
            <person name="O'Neil S."/>
            <person name="Pearson D."/>
            <person name="Quail M.A."/>
            <person name="Rabbinowitsch E."/>
            <person name="Rutherford K.M."/>
            <person name="Rutter S."/>
            <person name="Saunders D."/>
            <person name="Seeger K."/>
            <person name="Sharp S."/>
            <person name="Skelton J."/>
            <person name="Simmonds M.N."/>
            <person name="Squares R."/>
            <person name="Squares S."/>
            <person name="Stevens K."/>
            <person name="Taylor K."/>
            <person name="Taylor R.G."/>
            <person name="Tivey A."/>
            <person name="Walsh S.V."/>
            <person name="Warren T."/>
            <person name="Whitehead S."/>
            <person name="Woodward J.R."/>
            <person name="Volckaert G."/>
            <person name="Aert R."/>
            <person name="Robben J."/>
            <person name="Grymonprez B."/>
            <person name="Weltjens I."/>
            <person name="Vanstreels E."/>
            <person name="Rieger M."/>
            <person name="Schaefer M."/>
            <person name="Mueller-Auer S."/>
            <person name="Gabel C."/>
            <person name="Fuchs M."/>
            <person name="Duesterhoeft A."/>
            <person name="Fritzc C."/>
            <person name="Holzer E."/>
            <person name="Moestl D."/>
            <person name="Hilbert H."/>
            <person name="Borzym K."/>
            <person name="Langer I."/>
            <person name="Beck A."/>
            <person name="Lehrach H."/>
            <person name="Reinhardt R."/>
            <person name="Pohl T.M."/>
            <person name="Eger P."/>
            <person name="Zimmermann W."/>
            <person name="Wedler H."/>
            <person name="Wambutt R."/>
            <person name="Purnelle B."/>
            <person name="Goffeau A."/>
            <person name="Cadieu E."/>
            <person name="Dreano S."/>
            <person name="Gloux S."/>
            <person name="Lelaure V."/>
            <person name="Mottier S."/>
            <person name="Galibert F."/>
            <person name="Aves S.J."/>
            <person name="Xiang Z."/>
            <person name="Hunt C."/>
            <person name="Moore K."/>
            <person name="Hurst S.M."/>
            <person name="Lucas M."/>
            <person name="Rochet M."/>
            <person name="Gaillardin C."/>
            <person name="Tallada V.A."/>
            <person name="Garzon A."/>
            <person name="Thode G."/>
            <person name="Daga R.R."/>
            <person name="Cruzado L."/>
            <person name="Jimenez J."/>
            <person name="Sanchez M."/>
            <person name="del Rey F."/>
            <person name="Benito J."/>
            <person name="Dominguez A."/>
            <person name="Revuelta J.L."/>
            <person name="Moreno S."/>
            <person name="Armstrong J."/>
            <person name="Forsburg S.L."/>
            <person name="Cerutti L."/>
            <person name="Lowe T."/>
            <person name="McCombie W.R."/>
            <person name="Paulsen I."/>
            <person name="Potashkin J."/>
            <person name="Shpakovski G.V."/>
            <person name="Ussery D."/>
            <person name="Barrell B.G."/>
            <person name="Nurse P."/>
        </authorList>
    </citation>
    <scope>NUCLEOTIDE SEQUENCE [LARGE SCALE GENOMIC DNA]</scope>
    <source>
        <strain>972 / ATCC 24843</strain>
    </source>
</reference>
<reference key="2">
    <citation type="journal article" date="2006" name="Nat. Biotechnol.">
        <title>ORFeome cloning and global analysis of protein localization in the fission yeast Schizosaccharomyces pombe.</title>
        <authorList>
            <person name="Matsuyama A."/>
            <person name="Arai R."/>
            <person name="Yashiroda Y."/>
            <person name="Shirai A."/>
            <person name="Kamata A."/>
            <person name="Sekido S."/>
            <person name="Kobayashi Y."/>
            <person name="Hashimoto A."/>
            <person name="Hamamoto M."/>
            <person name="Hiraoka Y."/>
            <person name="Horinouchi S."/>
            <person name="Yoshida M."/>
        </authorList>
    </citation>
    <scope>SUBCELLULAR LOCATION [LARGE SCALE ANALYSIS]</scope>
</reference>
<accession>Q9Y7R7</accession>
<name>RL1DA_SCHPO</name>
<sequence length="284" mass="32403">MAITSEKKKNLKSLDKIDIKLLEKTIRALLQHIRSSDKPIEKEKVYIQVNTFQPVEKESLRRPSKVFLPHRIMHVTDACLIVKDSQQTYQDLVEQQGLDEVITKVLSIPRLKLKYKTIREKCELRDSHNLFLVDDRVLKYIPLLMGKVFEQKKIKPFPISVLQKKETLRNQVARCLHSTYLKLSAGTSHTILCGLATQTNEQLLENITTVLKCLLTNFIPKGWSAIDNVAIKTADSASLPIWTSDTNLAAHKRHIVHIQDARPLKKSELRAQKRGSSGEGKGNK</sequence>
<comment type="function">
    <text evidence="1">Involved in rRNA-processing and ribosome biosynthesis.</text>
</comment>
<comment type="subunit">
    <text evidence="1">Component of the 90S pre-ribosomes.</text>
</comment>
<comment type="subcellular location">
    <subcellularLocation>
        <location evidence="3">Nucleus</location>
        <location evidence="3">Nucleolus</location>
    </subcellularLocation>
</comment>
<comment type="similarity">
    <text evidence="4">Belongs to the universal ribosomal protein uL1 family. Highly divergent.</text>
</comment>
<gene>
    <name type="ORF">SPCC306.07c</name>
</gene>
<protein>
    <recommendedName>
        <fullName>Putative ribosome biogenesis protein C306.07c</fullName>
    </recommendedName>
    <alternativeName>
        <fullName>U3 snoRNP-associated protein C306.07c</fullName>
    </alternativeName>
</protein>
<proteinExistence type="inferred from homology"/>
<organism>
    <name type="scientific">Schizosaccharomyces pombe (strain 972 / ATCC 24843)</name>
    <name type="common">Fission yeast</name>
    <dbReference type="NCBI Taxonomy" id="284812"/>
    <lineage>
        <taxon>Eukaryota</taxon>
        <taxon>Fungi</taxon>
        <taxon>Dikarya</taxon>
        <taxon>Ascomycota</taxon>
        <taxon>Taphrinomycotina</taxon>
        <taxon>Schizosaccharomycetes</taxon>
        <taxon>Schizosaccharomycetales</taxon>
        <taxon>Schizosaccharomycetaceae</taxon>
        <taxon>Schizosaccharomyces</taxon>
    </lineage>
</organism>
<keyword id="KW-0539">Nucleus</keyword>
<keyword id="KW-1185">Reference proteome</keyword>
<keyword id="KW-0690">Ribosome biogenesis</keyword>
<keyword id="KW-0698">rRNA processing</keyword>
<dbReference type="EMBL" id="CU329672">
    <property type="protein sequence ID" value="CAB41655.1"/>
    <property type="molecule type" value="Genomic_DNA"/>
</dbReference>
<dbReference type="PIR" id="T41285">
    <property type="entry name" value="T41285"/>
</dbReference>
<dbReference type="RefSeq" id="NP_587815.1">
    <property type="nucleotide sequence ID" value="NM_001022808.2"/>
</dbReference>
<dbReference type="SMR" id="Q9Y7R7"/>
<dbReference type="BioGRID" id="275502">
    <property type="interactions" value="24"/>
</dbReference>
<dbReference type="FunCoup" id="Q9Y7R7">
    <property type="interactions" value="437"/>
</dbReference>
<dbReference type="STRING" id="284812.Q9Y7R7"/>
<dbReference type="iPTMnet" id="Q9Y7R7"/>
<dbReference type="PaxDb" id="4896-SPCC306.07c.1"/>
<dbReference type="EnsemblFungi" id="SPCC306.07c.1">
    <property type="protein sequence ID" value="SPCC306.07c.1:pep"/>
    <property type="gene ID" value="SPCC306.07c"/>
</dbReference>
<dbReference type="KEGG" id="spo:2538926"/>
<dbReference type="PomBase" id="SPCC306.07c"/>
<dbReference type="VEuPathDB" id="FungiDB:SPCC306.07c"/>
<dbReference type="eggNOG" id="KOG1685">
    <property type="taxonomic scope" value="Eukaryota"/>
</dbReference>
<dbReference type="HOGENOM" id="CLU_1001701_0_0_1"/>
<dbReference type="InParanoid" id="Q9Y7R7"/>
<dbReference type="OMA" id="KKDTIRH"/>
<dbReference type="PhylomeDB" id="Q9Y7R7"/>
<dbReference type="PRO" id="PR:Q9Y7R7"/>
<dbReference type="Proteomes" id="UP000002485">
    <property type="component" value="Chromosome III"/>
</dbReference>
<dbReference type="GO" id="GO:0005730">
    <property type="term" value="C:nucleolus"/>
    <property type="evidence" value="ECO:0007005"/>
    <property type="project" value="PomBase"/>
</dbReference>
<dbReference type="GO" id="GO:0005634">
    <property type="term" value="C:nucleus"/>
    <property type="evidence" value="ECO:0007005"/>
    <property type="project" value="PomBase"/>
</dbReference>
<dbReference type="GO" id="GO:0003723">
    <property type="term" value="F:RNA binding"/>
    <property type="evidence" value="ECO:0000318"/>
    <property type="project" value="GO_Central"/>
</dbReference>
<dbReference type="GO" id="GO:0042273">
    <property type="term" value="P:ribosomal large subunit biogenesis"/>
    <property type="evidence" value="ECO:0000266"/>
    <property type="project" value="PomBase"/>
</dbReference>
<dbReference type="GO" id="GO:0006364">
    <property type="term" value="P:rRNA processing"/>
    <property type="evidence" value="ECO:0007669"/>
    <property type="project" value="UniProtKB-KW"/>
</dbReference>
<dbReference type="CDD" id="cd00403">
    <property type="entry name" value="Ribosomal_L1"/>
    <property type="match status" value="1"/>
</dbReference>
<dbReference type="Gene3D" id="3.30.190.20">
    <property type="match status" value="1"/>
</dbReference>
<dbReference type="Gene3D" id="3.40.50.790">
    <property type="match status" value="1"/>
</dbReference>
<dbReference type="InterPro" id="IPR023674">
    <property type="entry name" value="Ribosomal_uL1-like"/>
</dbReference>
<dbReference type="InterPro" id="IPR028364">
    <property type="entry name" value="Ribosomal_uL1/biogenesis"/>
</dbReference>
<dbReference type="InterPro" id="IPR016095">
    <property type="entry name" value="Ribosomal_uL1_3-a/b-sand"/>
</dbReference>
<dbReference type="Pfam" id="PF00687">
    <property type="entry name" value="Ribosomal_L1"/>
    <property type="match status" value="1"/>
</dbReference>
<dbReference type="SUPFAM" id="SSF56808">
    <property type="entry name" value="Ribosomal protein L1"/>
    <property type="match status" value="1"/>
</dbReference>
<evidence type="ECO:0000250" key="1"/>
<evidence type="ECO:0000256" key="2">
    <source>
        <dbReference type="SAM" id="MobiDB-lite"/>
    </source>
</evidence>
<evidence type="ECO:0000269" key="3">
    <source>
    </source>
</evidence>
<evidence type="ECO:0000305" key="4"/>